<name>COCH_HUMAN</name>
<proteinExistence type="evidence at protein level"/>
<dbReference type="EMBL" id="AF006740">
    <property type="protein sequence ID" value="AAC39545.1"/>
    <property type="molecule type" value="mRNA"/>
</dbReference>
<dbReference type="EMBL" id="AY358900">
    <property type="protein sequence ID" value="AAQ89259.1"/>
    <property type="molecule type" value="mRNA"/>
</dbReference>
<dbReference type="EMBL" id="AK292724">
    <property type="protein sequence ID" value="BAF85413.1"/>
    <property type="molecule type" value="mRNA"/>
</dbReference>
<dbReference type="EMBL" id="AY916789">
    <property type="protein sequence ID" value="AAW82432.1"/>
    <property type="molecule type" value="Genomic_DNA"/>
</dbReference>
<dbReference type="EMBL" id="AL049830">
    <property type="status" value="NOT_ANNOTATED_CDS"/>
    <property type="molecule type" value="Genomic_DNA"/>
</dbReference>
<dbReference type="EMBL" id="CH471078">
    <property type="protein sequence ID" value="EAW65963.1"/>
    <property type="molecule type" value="Genomic_DNA"/>
</dbReference>
<dbReference type="EMBL" id="CH471078">
    <property type="protein sequence ID" value="EAW65964.1"/>
    <property type="molecule type" value="Genomic_DNA"/>
</dbReference>
<dbReference type="EMBL" id="CH471078">
    <property type="protein sequence ID" value="EAW65965.1"/>
    <property type="molecule type" value="Genomic_DNA"/>
</dbReference>
<dbReference type="EMBL" id="BC007230">
    <property type="protein sequence ID" value="AAH07230.1"/>
    <property type="molecule type" value="mRNA"/>
</dbReference>
<dbReference type="CCDS" id="CCDS9640.1">
    <molecule id="O43405-1"/>
</dbReference>
<dbReference type="RefSeq" id="NP_001128530.1">
    <molecule id="O43405-1"/>
    <property type="nucleotide sequence ID" value="NM_001135058.2"/>
</dbReference>
<dbReference type="RefSeq" id="NP_004077.1">
    <molecule id="O43405-1"/>
    <property type="nucleotide sequence ID" value="NM_004086.3"/>
</dbReference>
<dbReference type="RefSeq" id="XP_047287020.1">
    <molecule id="O43405-1"/>
    <property type="nucleotide sequence ID" value="XM_047431064.1"/>
</dbReference>
<dbReference type="PDB" id="1JBI">
    <property type="method" value="NMR"/>
    <property type="chains" value="A=28-124"/>
</dbReference>
<dbReference type="PDBsum" id="1JBI"/>
<dbReference type="SMR" id="O43405"/>
<dbReference type="BioGRID" id="108051">
    <property type="interactions" value="48"/>
</dbReference>
<dbReference type="FunCoup" id="O43405">
    <property type="interactions" value="387"/>
</dbReference>
<dbReference type="IntAct" id="O43405">
    <property type="interactions" value="35"/>
</dbReference>
<dbReference type="MINT" id="O43405"/>
<dbReference type="STRING" id="9606.ENSP00000216361"/>
<dbReference type="TCDB" id="8.A.54.1.3">
    <property type="family name" value="the integrin (integrin) family"/>
</dbReference>
<dbReference type="GlyCosmos" id="O43405">
    <property type="glycosylation" value="2 sites, No reported glycans"/>
</dbReference>
<dbReference type="GlyGen" id="O43405">
    <property type="glycosylation" value="8 sites, 7 N-linked glycans (2 sites), 2 O-linked glycans (6 sites)"/>
</dbReference>
<dbReference type="iPTMnet" id="O43405"/>
<dbReference type="PhosphoSitePlus" id="O43405"/>
<dbReference type="BioMuta" id="COCH"/>
<dbReference type="jPOST" id="O43405"/>
<dbReference type="MassIVE" id="O43405"/>
<dbReference type="PaxDb" id="9606-ENSP00000379862"/>
<dbReference type="PeptideAtlas" id="O43405"/>
<dbReference type="ProteomicsDB" id="48929">
    <molecule id="O43405-1"/>
</dbReference>
<dbReference type="ProteomicsDB" id="76856"/>
<dbReference type="Pumba" id="O43405"/>
<dbReference type="Antibodypedia" id="22996">
    <property type="antibodies" value="216 antibodies from 29 providers"/>
</dbReference>
<dbReference type="DNASU" id="1690"/>
<dbReference type="Ensembl" id="ENST00000396618.9">
    <molecule id="O43405-1"/>
    <property type="protein sequence ID" value="ENSP00000379862.3"/>
    <property type="gene ID" value="ENSG00000100473.18"/>
</dbReference>
<dbReference type="Ensembl" id="ENST00000475087.5">
    <molecule id="O43405-2"/>
    <property type="protein sequence ID" value="ENSP00000451528.1"/>
    <property type="gene ID" value="ENSG00000100473.18"/>
</dbReference>
<dbReference type="Ensembl" id="ENST00000643575.1">
    <molecule id="O43405-1"/>
    <property type="protein sequence ID" value="ENSP00000494838.1"/>
    <property type="gene ID" value="ENSG00000100473.18"/>
</dbReference>
<dbReference type="Ensembl" id="ENST00000644874.2">
    <molecule id="O43405-1"/>
    <property type="protein sequence ID" value="ENSP00000496360.1"/>
    <property type="gene ID" value="ENSG00000100473.18"/>
</dbReference>
<dbReference type="GeneID" id="1690"/>
<dbReference type="KEGG" id="hsa:1690"/>
<dbReference type="MANE-Select" id="ENST00000396618.9">
    <property type="protein sequence ID" value="ENSP00000379862.3"/>
    <property type="RefSeq nucleotide sequence ID" value="NM_004086.3"/>
    <property type="RefSeq protein sequence ID" value="NP_004077.1"/>
</dbReference>
<dbReference type="UCSC" id="uc001wqp.3">
    <molecule id="O43405-1"/>
    <property type="organism name" value="human"/>
</dbReference>
<dbReference type="AGR" id="HGNC:2180"/>
<dbReference type="CTD" id="1690"/>
<dbReference type="DisGeNET" id="1690"/>
<dbReference type="GeneCards" id="COCH"/>
<dbReference type="GeneReviews" id="COCH"/>
<dbReference type="HGNC" id="HGNC:2180">
    <property type="gene designation" value="COCH"/>
</dbReference>
<dbReference type="HPA" id="ENSG00000100473">
    <property type="expression patterns" value="Tissue enriched (pancreas)"/>
</dbReference>
<dbReference type="MalaCards" id="COCH"/>
<dbReference type="MIM" id="601369">
    <property type="type" value="phenotype"/>
</dbReference>
<dbReference type="MIM" id="603196">
    <property type="type" value="gene"/>
</dbReference>
<dbReference type="MIM" id="618094">
    <property type="type" value="phenotype"/>
</dbReference>
<dbReference type="neXtProt" id="NX_O43405"/>
<dbReference type="OpenTargets" id="ENSG00000100473"/>
<dbReference type="Orphanet" id="90635">
    <property type="disease" value="Rare autosomal dominant non-syndromic sensorineural deafness type DFNA"/>
</dbReference>
<dbReference type="PharmGKB" id="PA26693"/>
<dbReference type="VEuPathDB" id="HostDB:ENSG00000100473"/>
<dbReference type="eggNOG" id="KOG1216">
    <property type="taxonomic scope" value="Eukaryota"/>
</dbReference>
<dbReference type="GeneTree" id="ENSGT00940000159386"/>
<dbReference type="InParanoid" id="O43405"/>
<dbReference type="OMA" id="NFHLMLG"/>
<dbReference type="OrthoDB" id="441660at2759"/>
<dbReference type="PAN-GO" id="O43405">
    <property type="GO annotations" value="1 GO annotation based on evolutionary models"/>
</dbReference>
<dbReference type="PhylomeDB" id="O43405"/>
<dbReference type="TreeFam" id="TF318242"/>
<dbReference type="PathwayCommons" id="O43405"/>
<dbReference type="SignaLink" id="O43405"/>
<dbReference type="BioGRID-ORCS" id="1690">
    <property type="hits" value="22 hits in 1153 CRISPR screens"/>
</dbReference>
<dbReference type="ChiTaRS" id="COCH">
    <property type="organism name" value="human"/>
</dbReference>
<dbReference type="EvolutionaryTrace" id="O43405"/>
<dbReference type="GeneWiki" id="COCH"/>
<dbReference type="GenomeRNAi" id="1690"/>
<dbReference type="Pharos" id="O43405">
    <property type="development level" value="Tbio"/>
</dbReference>
<dbReference type="PRO" id="PR:O43405"/>
<dbReference type="Proteomes" id="UP000005640">
    <property type="component" value="Chromosome 14"/>
</dbReference>
<dbReference type="RNAct" id="O43405">
    <property type="molecule type" value="protein"/>
</dbReference>
<dbReference type="Bgee" id="ENSG00000100473">
    <property type="expression patterns" value="Expressed in buccal mucosa cell and 200 other cell types or tissues"/>
</dbReference>
<dbReference type="ExpressionAtlas" id="O43405">
    <property type="expression patterns" value="baseline and differential"/>
</dbReference>
<dbReference type="GO" id="GO:0062023">
    <property type="term" value="C:collagen-containing extracellular matrix"/>
    <property type="evidence" value="ECO:0000314"/>
    <property type="project" value="UniProtKB"/>
</dbReference>
<dbReference type="GO" id="GO:0005576">
    <property type="term" value="C:extracellular region"/>
    <property type="evidence" value="ECO:0007669"/>
    <property type="project" value="UniProtKB-KW"/>
</dbReference>
<dbReference type="GO" id="GO:0005518">
    <property type="term" value="F:collagen binding"/>
    <property type="evidence" value="ECO:0000314"/>
    <property type="project" value="UniProtKB"/>
</dbReference>
<dbReference type="GO" id="GO:0008360">
    <property type="term" value="P:regulation of cell shape"/>
    <property type="evidence" value="ECO:0000315"/>
    <property type="project" value="UniProtKB"/>
</dbReference>
<dbReference type="GO" id="GO:0007605">
    <property type="term" value="P:sensory perception of sound"/>
    <property type="evidence" value="ECO:0000304"/>
    <property type="project" value="ProtInc"/>
</dbReference>
<dbReference type="CDD" id="cd01472">
    <property type="entry name" value="vWA_collagen"/>
    <property type="match status" value="1"/>
</dbReference>
<dbReference type="CDD" id="cd01482">
    <property type="entry name" value="vWA_collagen_alphaI-XII-like"/>
    <property type="match status" value="1"/>
</dbReference>
<dbReference type="FunFam" id="3.40.50.410:FF:000029">
    <property type="entry name" value="Cochlin"/>
    <property type="match status" value="1"/>
</dbReference>
<dbReference type="FunFam" id="2.170.130.20:FF:000001">
    <property type="entry name" value="Cysteine-rich secretory protein LCCL domain-containing 1"/>
    <property type="match status" value="1"/>
</dbReference>
<dbReference type="FunFam" id="3.40.50.410:FF:000009">
    <property type="entry name" value="Putative vitrin"/>
    <property type="match status" value="1"/>
</dbReference>
<dbReference type="Gene3D" id="2.170.130.20">
    <property type="entry name" value="LCCL-like domain"/>
    <property type="match status" value="1"/>
</dbReference>
<dbReference type="Gene3D" id="3.40.50.410">
    <property type="entry name" value="von Willebrand factor, type A domain"/>
    <property type="match status" value="2"/>
</dbReference>
<dbReference type="InterPro" id="IPR050525">
    <property type="entry name" value="ECM_Assembly_Org"/>
</dbReference>
<dbReference type="InterPro" id="IPR004043">
    <property type="entry name" value="LCCL"/>
</dbReference>
<dbReference type="InterPro" id="IPR036609">
    <property type="entry name" value="LCCL_sf"/>
</dbReference>
<dbReference type="InterPro" id="IPR002035">
    <property type="entry name" value="VWF_A"/>
</dbReference>
<dbReference type="InterPro" id="IPR036465">
    <property type="entry name" value="vWFA_dom_sf"/>
</dbReference>
<dbReference type="PANTHER" id="PTHR24020:SF36">
    <property type="entry name" value="COCHLIN"/>
    <property type="match status" value="1"/>
</dbReference>
<dbReference type="PANTHER" id="PTHR24020">
    <property type="entry name" value="COLLAGEN ALPHA"/>
    <property type="match status" value="1"/>
</dbReference>
<dbReference type="Pfam" id="PF03815">
    <property type="entry name" value="LCCL"/>
    <property type="match status" value="1"/>
</dbReference>
<dbReference type="Pfam" id="PF00092">
    <property type="entry name" value="VWA"/>
    <property type="match status" value="2"/>
</dbReference>
<dbReference type="PRINTS" id="PR00453">
    <property type="entry name" value="VWFADOMAIN"/>
</dbReference>
<dbReference type="SMART" id="SM00603">
    <property type="entry name" value="LCCL"/>
    <property type="match status" value="1"/>
</dbReference>
<dbReference type="SMART" id="SM00327">
    <property type="entry name" value="VWA"/>
    <property type="match status" value="2"/>
</dbReference>
<dbReference type="SUPFAM" id="SSF69848">
    <property type="entry name" value="LCCL domain"/>
    <property type="match status" value="1"/>
</dbReference>
<dbReference type="SUPFAM" id="SSF53300">
    <property type="entry name" value="vWA-like"/>
    <property type="match status" value="2"/>
</dbReference>
<dbReference type="PROSITE" id="PS50820">
    <property type="entry name" value="LCCL"/>
    <property type="match status" value="1"/>
</dbReference>
<dbReference type="PROSITE" id="PS50234">
    <property type="entry name" value="VWFA"/>
    <property type="match status" value="2"/>
</dbReference>
<accession>O43405</accession>
<accession>A8K9K9</accession>
<accession>D3DS84</accession>
<accession>Q96IU6</accession>
<feature type="signal peptide" evidence="1">
    <location>
        <begin position="1"/>
        <end position="24"/>
    </location>
</feature>
<feature type="chain" id="PRO_0000020968" description="Cochlin">
    <location>
        <begin position="25"/>
        <end position="550"/>
    </location>
</feature>
<feature type="domain" description="LCCL" evidence="2">
    <location>
        <begin position="28"/>
        <end position="121"/>
    </location>
</feature>
<feature type="domain" description="VWFA 1" evidence="3">
    <location>
        <begin position="165"/>
        <end position="346"/>
    </location>
</feature>
<feature type="domain" description="VWFA 2" evidence="3">
    <location>
        <begin position="367"/>
        <end position="537"/>
    </location>
</feature>
<feature type="region of interest" description="Disordered" evidence="4">
    <location>
        <begin position="128"/>
        <end position="159"/>
    </location>
</feature>
<feature type="compositionally biased region" description="Polar residues" evidence="4">
    <location>
        <begin position="128"/>
        <end position="139"/>
    </location>
</feature>
<feature type="glycosylation site" description="N-linked (GlcNAc...) asparagine" evidence="1">
    <location>
        <position position="100"/>
    </location>
</feature>
<feature type="glycosylation site" description="N-linked (GlcNAc...) asparagine" evidence="1">
    <location>
        <position position="221"/>
    </location>
</feature>
<feature type="disulfide bond">
    <location>
        <begin position="34"/>
        <end position="50"/>
    </location>
</feature>
<feature type="disulfide bond">
    <location>
        <begin position="54"/>
        <end position="74"/>
    </location>
</feature>
<feature type="splice variant" id="VSP_056538" description="In isoform 2." evidence="23">
    <original>GITIFSVGVAWAPLDDLKDMASKPKESHAFFTREFTGLEPIVSDVIRGICRDFLESQQ</original>
    <variation>AK</variation>
    <location>
        <begin position="493"/>
        <end position="550"/>
    </location>
</feature>
<feature type="sequence variant" id="VAR_079876" description="In DFNA9." evidence="18">
    <original>G</original>
    <variation>D</variation>
    <location>
        <position position="38"/>
    </location>
</feature>
<feature type="sequence variant" id="VAR_008532" description="In DFNA9; some families may manifest Meniere disease-like symptoms; does not affect protein deposition to the extracellular matrix; dbSNP:rs28938175." evidence="5 8 21">
    <original>P</original>
    <variation>S</variation>
    <location>
        <position position="51"/>
    </location>
</feature>
<feature type="sequence variant" id="VAR_008533" description="In DFNA9; affects protein deposition to the extracellular matrix; dbSNP:rs121908927." evidence="8 20">
    <original>V</original>
    <variation>G</variation>
    <location>
        <position position="66"/>
    </location>
</feature>
<feature type="sequence variant" id="VAR_072249" description="In DFNA9." evidence="17">
    <original>G</original>
    <variation>V</variation>
    <location>
        <position position="87"/>
    </location>
</feature>
<feature type="sequence variant" id="VAR_072250" description="In DFNA9." evidence="10">
    <original>G</original>
    <variation>W</variation>
    <location>
        <position position="87"/>
    </location>
</feature>
<feature type="sequence variant" id="VAR_008534" description="In DFNA9; affects protein deposition to the extracellular matrix; dbSNP:rs121908928." evidence="8 20">
    <original>G</original>
    <variation>E</variation>
    <location>
        <position position="88"/>
    </location>
</feature>
<feature type="sequence variant" id="VAR_081173" description="In DFNB110." evidence="19">
    <location>
        <begin position="98"/>
        <end position="550"/>
    </location>
</feature>
<feature type="sequence variant" id="VAR_008535" description="In DFNA9; affects protein deposition to the extracellular matrix; dbSNP:rs121908930." evidence="6 8">
    <original>I</original>
    <variation>N</variation>
    <location>
        <position position="109"/>
    </location>
</feature>
<feature type="sequence variant" id="VAR_072251" description="In DFNA9; dbSNP:rs121908930." evidence="11">
    <original>I</original>
    <variation>T</variation>
    <location>
        <position position="109"/>
    </location>
</feature>
<feature type="sequence variant" id="VAR_008536" description="In DFNA9; does not affect protein deposition to the extracellular matrix; dbSNP:rs121908929." evidence="8 20">
    <original>W</original>
    <variation>R</variation>
    <location>
        <position position="117"/>
    </location>
</feature>
<feature type="sequence variant" id="VAR_017175" description="In DFNA9; uncertain significance; dbSNP:rs121908931." evidence="9">
    <original>A</original>
    <variation>T</variation>
    <location>
        <position position="119"/>
    </location>
</feature>
<feature type="sequence variant" id="VAR_022259" description="In dbSNP:rs28400035." evidence="22">
    <original>G</original>
    <variation>R</variation>
    <location>
        <position position="135"/>
    </location>
</feature>
<feature type="sequence variant" id="VAR_070034" description="In DFNA9." evidence="16">
    <original>C</original>
    <variation>Y</variation>
    <location>
        <position position="162"/>
    </location>
</feature>
<feature type="sequence variant" id="VAR_022260" description="In dbSNP:rs28362775." evidence="22">
    <original>D</original>
    <variation>N</variation>
    <location>
        <position position="281"/>
    </location>
</feature>
<feature type="sequence variant" id="VAR_011925" description="In dbSNP:rs1045644." evidence="22">
    <original>T</original>
    <variation>S</variation>
    <location>
        <position position="352"/>
    </location>
</feature>
<feature type="sequence variant" id="VAR_022261" description="In dbSNP:rs28362778." evidence="22">
    <original>I</original>
    <variation>V</variation>
    <location>
        <position position="402"/>
    </location>
</feature>
<feature type="sequence variant" id="VAR_072252" description="In DFNA9; dbSNP:rs121908934." evidence="13">
    <original>M</original>
    <variation>T</variation>
    <location>
        <position position="512"/>
    </location>
</feature>
<feature type="sequence variant" id="VAR_050896" description="In dbSNP:rs17097468.">
    <original>E</original>
    <variation>G</variation>
    <location>
        <position position="518"/>
    </location>
</feature>
<feature type="sequence variant" id="VAR_072253" description="In DFNA9; induces disulfide bond dimer formation; keeps dimer in the cell and reduces secretion; monomeric and/or homodimeric mutant forms do not prevent interaction with type II collagen." evidence="15">
    <original>F</original>
    <variation>C</variation>
    <location>
        <position position="527"/>
    </location>
</feature>
<feature type="sequence variant" id="VAR_011926" description="In dbSNP:rs1801963.">
    <original>P</original>
    <variation>S</variation>
    <location>
        <position position="532"/>
    </location>
</feature>
<feature type="sequence variant" id="VAR_072254" description="In DFNA9; dbSNP:rs121908932." evidence="13">
    <original>C</original>
    <variation>Y</variation>
    <location>
        <position position="542"/>
    </location>
</feature>
<feature type="turn" evidence="24">
    <location>
        <begin position="38"/>
        <end position="40"/>
    </location>
</feature>
<feature type="strand" evidence="24">
    <location>
        <begin position="43"/>
        <end position="50"/>
    </location>
</feature>
<feature type="strand" evidence="24">
    <location>
        <begin position="56"/>
        <end position="58"/>
    </location>
</feature>
<feature type="strand" evidence="24">
    <location>
        <begin position="61"/>
        <end position="68"/>
    </location>
</feature>
<feature type="helix" evidence="24">
    <location>
        <begin position="73"/>
        <end position="80"/>
    </location>
</feature>
<feature type="strand" evidence="24">
    <location>
        <begin position="88"/>
        <end position="95"/>
    </location>
</feature>
<feature type="strand" evidence="24">
    <location>
        <begin position="110"/>
        <end position="112"/>
    </location>
</feature>
<feature type="strand" evidence="24">
    <location>
        <begin position="120"/>
        <end position="124"/>
    </location>
</feature>
<gene>
    <name type="primary">COCH</name>
    <name type="synonym">COCH5B2</name>
    <name type="ORF">UNQ257/PRO294</name>
</gene>
<keyword id="KW-0002">3D-structure</keyword>
<keyword id="KW-0025">Alternative splicing</keyword>
<keyword id="KW-0209">Deafness</keyword>
<keyword id="KW-0225">Disease variant</keyword>
<keyword id="KW-1015">Disulfide bond</keyword>
<keyword id="KW-0272">Extracellular matrix</keyword>
<keyword id="KW-0325">Glycoprotein</keyword>
<keyword id="KW-1009">Hearing</keyword>
<keyword id="KW-1010">Non-syndromic deafness</keyword>
<keyword id="KW-1267">Proteomics identification</keyword>
<keyword id="KW-1185">Reference proteome</keyword>
<keyword id="KW-0677">Repeat</keyword>
<keyword id="KW-0964">Secreted</keyword>
<keyword id="KW-0732">Signal</keyword>
<protein>
    <recommendedName>
        <fullName>Cochlin</fullName>
    </recommendedName>
    <alternativeName>
        <fullName>COCH-5B2</fullName>
    </alternativeName>
</protein>
<organism>
    <name type="scientific">Homo sapiens</name>
    <name type="common">Human</name>
    <dbReference type="NCBI Taxonomy" id="9606"/>
    <lineage>
        <taxon>Eukaryota</taxon>
        <taxon>Metazoa</taxon>
        <taxon>Chordata</taxon>
        <taxon>Craniata</taxon>
        <taxon>Vertebrata</taxon>
        <taxon>Euteleostomi</taxon>
        <taxon>Mammalia</taxon>
        <taxon>Eutheria</taxon>
        <taxon>Euarchontoglires</taxon>
        <taxon>Primates</taxon>
        <taxon>Haplorrhini</taxon>
        <taxon>Catarrhini</taxon>
        <taxon>Hominidae</taxon>
        <taxon>Homo</taxon>
    </lineage>
</organism>
<evidence type="ECO:0000255" key="1"/>
<evidence type="ECO:0000255" key="2">
    <source>
        <dbReference type="PROSITE-ProRule" id="PRU00123"/>
    </source>
</evidence>
<evidence type="ECO:0000255" key="3">
    <source>
        <dbReference type="PROSITE-ProRule" id="PRU00219"/>
    </source>
</evidence>
<evidence type="ECO:0000256" key="4">
    <source>
        <dbReference type="SAM" id="MobiDB-lite"/>
    </source>
</evidence>
<evidence type="ECO:0000269" key="5">
    <source>
    </source>
</evidence>
<evidence type="ECO:0000269" key="6">
    <source>
    </source>
</evidence>
<evidence type="ECO:0000269" key="7">
    <source>
    </source>
</evidence>
<evidence type="ECO:0000269" key="8">
    <source>
    </source>
</evidence>
<evidence type="ECO:0000269" key="9">
    <source>
    </source>
</evidence>
<evidence type="ECO:0000269" key="10">
    <source>
    </source>
</evidence>
<evidence type="ECO:0000269" key="11">
    <source>
    </source>
</evidence>
<evidence type="ECO:0000269" key="12">
    <source>
    </source>
</evidence>
<evidence type="ECO:0000269" key="13">
    <source>
    </source>
</evidence>
<evidence type="ECO:0000269" key="14">
    <source>
    </source>
</evidence>
<evidence type="ECO:0000269" key="15">
    <source>
    </source>
</evidence>
<evidence type="ECO:0000269" key="16">
    <source>
    </source>
</evidence>
<evidence type="ECO:0000269" key="17">
    <source>
    </source>
</evidence>
<evidence type="ECO:0000269" key="18">
    <source>
    </source>
</evidence>
<evidence type="ECO:0000269" key="19">
    <source>
    </source>
</evidence>
<evidence type="ECO:0000269" key="20">
    <source>
    </source>
</evidence>
<evidence type="ECO:0000269" key="21">
    <source>
    </source>
</evidence>
<evidence type="ECO:0000269" key="22">
    <source ref="4"/>
</evidence>
<evidence type="ECO:0000303" key="23">
    <source>
    </source>
</evidence>
<evidence type="ECO:0007829" key="24">
    <source>
        <dbReference type="PDB" id="1JBI"/>
    </source>
</evidence>
<sequence length="550" mass="59483">MSAAWIPALGLGVCLLLLPGPAGSEGAAPIAITCFTRGLDIRKEKADVLCPGGCPLEEFSVYGNIVYASVSSICGAAVHRGVISNSGGPVRVYSLPGRENYSSVDANGIQSQMLSRWSASFTVTKGKSSTQEATGQAVSTAHPPTGKRLKKTPEKKTGNKDCKADIAFLIDGSFNIGQRRFNLQKNFVGKVALMLGIGTEGPHVGLVQASEHPKIEFYLKNFTSAKDVLFAIKEVGFRGGNSNTGKALKHTAQKFFTVDAGVRKGIPKVVVVFIDGWPSDDIEEAGIVAREFGVNVFIVSVAKPIPEELGMVQDVTFVDKAVCRNNGFFSYHMPNWFGTTKYVKPLVQKLCTHEQMMCSKTCYNSVNIAFLIDGSSSVGDSNFRLMLEFVSNIAKTFEISDIGAKIAAVQFTYDQRTEFSFTDYSTKENVLAVIRNIRYMSGGTATGDAISFTVRNVFGPIRESPNKNFLVIVTDGQSYDDVQGPAAAAHDAGITIFSVGVAWAPLDDLKDMASKPKESHAFFTREFTGLEPIVSDVIRGICRDFLESQQ</sequence>
<comment type="function">
    <text evidence="14">Plays a role in the control of cell shape and motility in the trabecular meshwork.</text>
</comment>
<comment type="subunit">
    <text evidence="12 14 15">Monomer (PubMed:22610276). May form homodimer (PubMed:22610276). Interacts with type II collagen (PubMed:22610276). Interacts with SLC44A2 (PubMed:17926100). Interacts with ANXA2 (PubMed:21886777).</text>
</comment>
<comment type="interaction">
    <interactant intactId="EBI-25896722">
        <id>O43405-2</id>
    </interactant>
    <interactant intactId="EBI-720609">
        <id>O76024</id>
        <label>WFS1</label>
    </interactant>
    <organismsDiffer>false</organismsDiffer>
    <experiments>3</experiments>
</comment>
<comment type="subcellular location">
    <subcellularLocation>
        <location evidence="7 15">Secreted</location>
        <location evidence="7 15">Extracellular space</location>
        <location evidence="7 15">Extracellular matrix</location>
    </subcellularLocation>
</comment>
<comment type="alternative products">
    <event type="alternative splicing"/>
    <isoform>
        <id>O43405-1</id>
        <name>1</name>
        <sequence type="displayed"/>
    </isoform>
    <isoform>
        <id>O43405-2</id>
        <name>2</name>
        <sequence type="described" ref="VSP_056538"/>
    </isoform>
</comment>
<comment type="tissue specificity">
    <text>Expressed in inner ear structures; the cochlea and the vestibule.</text>
</comment>
<comment type="PTM">
    <text evidence="7">N-glycosylated.</text>
</comment>
<comment type="PTM">
    <text evidence="7">A 50 kDa form is created by proteolytic cleavage.</text>
</comment>
<comment type="disease" evidence="5 6 8 9 10 11 13 15 16 17 18 20 21">
    <disease id="DI-00839">
        <name>Deafness, autosomal dominant, 9</name>
        <acronym>DFNA9</acronym>
        <description>A form of non-syndromic hearing loss characterized by onset in the fourth or fifth decade of life and initially involves the high frequencies. Hearing loss is progressive and usually complete by the sixth decade. In addition to cochlear involvement, DFNA9 patients also exhibit a spectrum of vestibular dysfunctions. Penetrance of the vestibular symptoms is often incomplete, and some patients are minimally affected, whereas others suffer from severe balance disturbances and episodes of vertigo. Affected individuals have mucopolysaccharide depositions in the channels of the cochlear and vestibular nerves. These depositions apparently cause strangulation and degeneration of dendritic fibers.</description>
        <dbReference type="MIM" id="601369"/>
    </disease>
    <text>The disease is caused by variants affecting the gene represented in this entry.</text>
</comment>
<comment type="disease" evidence="19">
    <disease id="DI-05316">
        <name>Deafness, autosomal recessive, 110</name>
        <acronym>DFNB110</acronym>
        <description>A form of non-syndromic, sensorineural deafness characterized by prelingual hearing loss. Sensorineural deafness results from damage to the neural receptors of the inner ear, the nerve pathways to the brain, or the area of the brain that receives sound information. DFNB110 affected individuals additionally exhibit mild, age-dependent vestibular dysfunction.</description>
        <dbReference type="MIM" id="618094"/>
    </disease>
    <text>The disease is caused by variants affecting the gene represented in this entry.</text>
</comment>
<comment type="online information" name="Protein Spotlight">
    <link uri="https://www.proteinspotlight.org/back_issues/004"/>
    <text>The Japanese Horseshoe Crab and Deafness - Issue 4 of November 2000</text>
</comment>
<comment type="online information" name="Hereditary hearing loss homepage">
    <link uri="https://hereditaryhearingloss.org/dominant"/>
    <text>Gene page</text>
</comment>
<reference key="1">
    <citation type="journal article" date="1997" name="Genomics">
        <title>Mapping and characterization of a novel cochlear gene in human and in mouse: a positional candidate gene for a deafness disorder, DFNA9.</title>
        <authorList>
            <person name="Robertson N.G."/>
            <person name="Skvorak A.B."/>
            <person name="Yin Y."/>
            <person name="Weremowicz S."/>
            <person name="Johnson K.R."/>
            <person name="Kovatch K.A."/>
            <person name="Battey J.F."/>
            <person name="Bieber F.R."/>
            <person name="Morton C.C."/>
        </authorList>
    </citation>
    <scope>NUCLEOTIDE SEQUENCE [MRNA] (ISOFORM 1)</scope>
    <source>
        <tissue>Cochlea</tissue>
    </source>
</reference>
<reference key="2">
    <citation type="journal article" date="2003" name="Genome Res.">
        <title>The secreted protein discovery initiative (SPDI), a large-scale effort to identify novel human secreted and transmembrane proteins: a bioinformatics assessment.</title>
        <authorList>
            <person name="Clark H.F."/>
            <person name="Gurney A.L."/>
            <person name="Abaya E."/>
            <person name="Baker K."/>
            <person name="Baldwin D.T."/>
            <person name="Brush J."/>
            <person name="Chen J."/>
            <person name="Chow B."/>
            <person name="Chui C."/>
            <person name="Crowley C."/>
            <person name="Currell B."/>
            <person name="Deuel B."/>
            <person name="Dowd P."/>
            <person name="Eaton D."/>
            <person name="Foster J.S."/>
            <person name="Grimaldi C."/>
            <person name="Gu Q."/>
            <person name="Hass P.E."/>
            <person name="Heldens S."/>
            <person name="Huang A."/>
            <person name="Kim H.S."/>
            <person name="Klimowski L."/>
            <person name="Jin Y."/>
            <person name="Johnson S."/>
            <person name="Lee J."/>
            <person name="Lewis L."/>
            <person name="Liao D."/>
            <person name="Mark M.R."/>
            <person name="Robbie E."/>
            <person name="Sanchez C."/>
            <person name="Schoenfeld J."/>
            <person name="Seshagiri S."/>
            <person name="Simmons L."/>
            <person name="Singh J."/>
            <person name="Smith V."/>
            <person name="Stinson J."/>
            <person name="Vagts A."/>
            <person name="Vandlen R.L."/>
            <person name="Watanabe C."/>
            <person name="Wieand D."/>
            <person name="Woods K."/>
            <person name="Xie M.-H."/>
            <person name="Yansura D.G."/>
            <person name="Yi S."/>
            <person name="Yu G."/>
            <person name="Yuan J."/>
            <person name="Zhang M."/>
            <person name="Zhang Z."/>
            <person name="Goddard A.D."/>
            <person name="Wood W.I."/>
            <person name="Godowski P.J."/>
            <person name="Gray A.M."/>
        </authorList>
    </citation>
    <scope>NUCLEOTIDE SEQUENCE [LARGE SCALE MRNA] (ISOFORM 1)</scope>
</reference>
<reference key="3">
    <citation type="journal article" date="2004" name="Nat. Genet.">
        <title>Complete sequencing and characterization of 21,243 full-length human cDNAs.</title>
        <authorList>
            <person name="Ota T."/>
            <person name="Suzuki Y."/>
            <person name="Nishikawa T."/>
            <person name="Otsuki T."/>
            <person name="Sugiyama T."/>
            <person name="Irie R."/>
            <person name="Wakamatsu A."/>
            <person name="Hayashi K."/>
            <person name="Sato H."/>
            <person name="Nagai K."/>
            <person name="Kimura K."/>
            <person name="Makita H."/>
            <person name="Sekine M."/>
            <person name="Obayashi M."/>
            <person name="Nishi T."/>
            <person name="Shibahara T."/>
            <person name="Tanaka T."/>
            <person name="Ishii S."/>
            <person name="Yamamoto J."/>
            <person name="Saito K."/>
            <person name="Kawai Y."/>
            <person name="Isono Y."/>
            <person name="Nakamura Y."/>
            <person name="Nagahari K."/>
            <person name="Murakami K."/>
            <person name="Yasuda T."/>
            <person name="Iwayanagi T."/>
            <person name="Wagatsuma M."/>
            <person name="Shiratori A."/>
            <person name="Sudo H."/>
            <person name="Hosoiri T."/>
            <person name="Kaku Y."/>
            <person name="Kodaira H."/>
            <person name="Kondo H."/>
            <person name="Sugawara M."/>
            <person name="Takahashi M."/>
            <person name="Kanda K."/>
            <person name="Yokoi T."/>
            <person name="Furuya T."/>
            <person name="Kikkawa E."/>
            <person name="Omura Y."/>
            <person name="Abe K."/>
            <person name="Kamihara K."/>
            <person name="Katsuta N."/>
            <person name="Sato K."/>
            <person name="Tanikawa M."/>
            <person name="Yamazaki M."/>
            <person name="Ninomiya K."/>
            <person name="Ishibashi T."/>
            <person name="Yamashita H."/>
            <person name="Murakawa K."/>
            <person name="Fujimori K."/>
            <person name="Tanai H."/>
            <person name="Kimata M."/>
            <person name="Watanabe M."/>
            <person name="Hiraoka S."/>
            <person name="Chiba Y."/>
            <person name="Ishida S."/>
            <person name="Ono Y."/>
            <person name="Takiguchi S."/>
            <person name="Watanabe S."/>
            <person name="Yosida M."/>
            <person name="Hotuta T."/>
            <person name="Kusano J."/>
            <person name="Kanehori K."/>
            <person name="Takahashi-Fujii A."/>
            <person name="Hara H."/>
            <person name="Tanase T.-O."/>
            <person name="Nomura Y."/>
            <person name="Togiya S."/>
            <person name="Komai F."/>
            <person name="Hara R."/>
            <person name="Takeuchi K."/>
            <person name="Arita M."/>
            <person name="Imose N."/>
            <person name="Musashino K."/>
            <person name="Yuuki H."/>
            <person name="Oshima A."/>
            <person name="Sasaki N."/>
            <person name="Aotsuka S."/>
            <person name="Yoshikawa Y."/>
            <person name="Matsunawa H."/>
            <person name="Ichihara T."/>
            <person name="Shiohata N."/>
            <person name="Sano S."/>
            <person name="Moriya S."/>
            <person name="Momiyama H."/>
            <person name="Satoh N."/>
            <person name="Takami S."/>
            <person name="Terashima Y."/>
            <person name="Suzuki O."/>
            <person name="Nakagawa S."/>
            <person name="Senoh A."/>
            <person name="Mizoguchi H."/>
            <person name="Goto Y."/>
            <person name="Shimizu F."/>
            <person name="Wakebe H."/>
            <person name="Hishigaki H."/>
            <person name="Watanabe T."/>
            <person name="Sugiyama A."/>
            <person name="Takemoto M."/>
            <person name="Kawakami B."/>
            <person name="Yamazaki M."/>
            <person name="Watanabe K."/>
            <person name="Kumagai A."/>
            <person name="Itakura S."/>
            <person name="Fukuzumi Y."/>
            <person name="Fujimori Y."/>
            <person name="Komiyama M."/>
            <person name="Tashiro H."/>
            <person name="Tanigami A."/>
            <person name="Fujiwara T."/>
            <person name="Ono T."/>
            <person name="Yamada K."/>
            <person name="Fujii Y."/>
            <person name="Ozaki K."/>
            <person name="Hirao M."/>
            <person name="Ohmori Y."/>
            <person name="Kawabata A."/>
            <person name="Hikiji T."/>
            <person name="Kobatake N."/>
            <person name="Inagaki H."/>
            <person name="Ikema Y."/>
            <person name="Okamoto S."/>
            <person name="Okitani R."/>
            <person name="Kawakami T."/>
            <person name="Noguchi S."/>
            <person name="Itoh T."/>
            <person name="Shigeta K."/>
            <person name="Senba T."/>
            <person name="Matsumura K."/>
            <person name="Nakajima Y."/>
            <person name="Mizuno T."/>
            <person name="Morinaga M."/>
            <person name="Sasaki M."/>
            <person name="Togashi T."/>
            <person name="Oyama M."/>
            <person name="Hata H."/>
            <person name="Watanabe M."/>
            <person name="Komatsu T."/>
            <person name="Mizushima-Sugano J."/>
            <person name="Satoh T."/>
            <person name="Shirai Y."/>
            <person name="Takahashi Y."/>
            <person name="Nakagawa K."/>
            <person name="Okumura K."/>
            <person name="Nagase T."/>
            <person name="Nomura N."/>
            <person name="Kikuchi H."/>
            <person name="Masuho Y."/>
            <person name="Yamashita R."/>
            <person name="Nakai K."/>
            <person name="Yada T."/>
            <person name="Nakamura Y."/>
            <person name="Ohara O."/>
            <person name="Isogai T."/>
            <person name="Sugano S."/>
        </authorList>
    </citation>
    <scope>NUCLEOTIDE SEQUENCE [LARGE SCALE MRNA] (ISOFORM 1)</scope>
    <source>
        <tissue>Kidney</tissue>
    </source>
</reference>
<reference key="4">
    <citation type="submission" date="2005-02" db="EMBL/GenBank/DDBJ databases">
        <authorList>
            <consortium name="SeattleSNPs variation discovery resource"/>
        </authorList>
    </citation>
    <scope>NUCLEOTIDE SEQUENCE [GENOMIC DNA]</scope>
    <scope>VARIANTS ARG-135; ASN-281; SER-352 AND VAL-402</scope>
</reference>
<reference key="5">
    <citation type="journal article" date="2003" name="Nature">
        <title>The DNA sequence and analysis of human chromosome 14.</title>
        <authorList>
            <person name="Heilig R."/>
            <person name="Eckenberg R."/>
            <person name="Petit J.-L."/>
            <person name="Fonknechten N."/>
            <person name="Da Silva C."/>
            <person name="Cattolico L."/>
            <person name="Levy M."/>
            <person name="Barbe V."/>
            <person name="De Berardinis V."/>
            <person name="Ureta-Vidal A."/>
            <person name="Pelletier E."/>
            <person name="Vico V."/>
            <person name="Anthouard V."/>
            <person name="Rowen L."/>
            <person name="Madan A."/>
            <person name="Qin S."/>
            <person name="Sun H."/>
            <person name="Du H."/>
            <person name="Pepin K."/>
            <person name="Artiguenave F."/>
            <person name="Robert C."/>
            <person name="Cruaud C."/>
            <person name="Bruels T."/>
            <person name="Jaillon O."/>
            <person name="Friedlander L."/>
            <person name="Samson G."/>
            <person name="Brottier P."/>
            <person name="Cure S."/>
            <person name="Segurens B."/>
            <person name="Aniere F."/>
            <person name="Samain S."/>
            <person name="Crespeau H."/>
            <person name="Abbasi N."/>
            <person name="Aiach N."/>
            <person name="Boscus D."/>
            <person name="Dickhoff R."/>
            <person name="Dors M."/>
            <person name="Dubois I."/>
            <person name="Friedman C."/>
            <person name="Gouyvenoux M."/>
            <person name="James R."/>
            <person name="Madan A."/>
            <person name="Mairey-Estrada B."/>
            <person name="Mangenot S."/>
            <person name="Martins N."/>
            <person name="Menard M."/>
            <person name="Oztas S."/>
            <person name="Ratcliffe A."/>
            <person name="Shaffer T."/>
            <person name="Trask B."/>
            <person name="Vacherie B."/>
            <person name="Bellemere C."/>
            <person name="Belser C."/>
            <person name="Besnard-Gonnet M."/>
            <person name="Bartol-Mavel D."/>
            <person name="Boutard M."/>
            <person name="Briez-Silla S."/>
            <person name="Combette S."/>
            <person name="Dufosse-Laurent V."/>
            <person name="Ferron C."/>
            <person name="Lechaplais C."/>
            <person name="Louesse C."/>
            <person name="Muselet D."/>
            <person name="Magdelenat G."/>
            <person name="Pateau E."/>
            <person name="Petit E."/>
            <person name="Sirvain-Trukniewicz P."/>
            <person name="Trybou A."/>
            <person name="Vega-Czarny N."/>
            <person name="Bataille E."/>
            <person name="Bluet E."/>
            <person name="Bordelais I."/>
            <person name="Dubois M."/>
            <person name="Dumont C."/>
            <person name="Guerin T."/>
            <person name="Haffray S."/>
            <person name="Hammadi R."/>
            <person name="Muanga J."/>
            <person name="Pellouin V."/>
            <person name="Robert D."/>
            <person name="Wunderle E."/>
            <person name="Gauguet G."/>
            <person name="Roy A."/>
            <person name="Sainte-Marthe L."/>
            <person name="Verdier J."/>
            <person name="Verdier-Discala C."/>
            <person name="Hillier L.W."/>
            <person name="Fulton L."/>
            <person name="McPherson J."/>
            <person name="Matsuda F."/>
            <person name="Wilson R."/>
            <person name="Scarpelli C."/>
            <person name="Gyapay G."/>
            <person name="Wincker P."/>
            <person name="Saurin W."/>
            <person name="Quetier F."/>
            <person name="Waterston R."/>
            <person name="Hood L."/>
            <person name="Weissenbach J."/>
        </authorList>
    </citation>
    <scope>NUCLEOTIDE SEQUENCE [LARGE SCALE GENOMIC DNA]</scope>
</reference>
<reference key="6">
    <citation type="submission" date="2005-09" db="EMBL/GenBank/DDBJ databases">
        <authorList>
            <person name="Mural R.J."/>
            <person name="Istrail S."/>
            <person name="Sutton G.G."/>
            <person name="Florea L."/>
            <person name="Halpern A.L."/>
            <person name="Mobarry C.M."/>
            <person name="Lippert R."/>
            <person name="Walenz B."/>
            <person name="Shatkay H."/>
            <person name="Dew I."/>
            <person name="Miller J.R."/>
            <person name="Flanigan M.J."/>
            <person name="Edwards N.J."/>
            <person name="Bolanos R."/>
            <person name="Fasulo D."/>
            <person name="Halldorsson B.V."/>
            <person name="Hannenhalli S."/>
            <person name="Turner R."/>
            <person name="Yooseph S."/>
            <person name="Lu F."/>
            <person name="Nusskern D.R."/>
            <person name="Shue B.C."/>
            <person name="Zheng X.H."/>
            <person name="Zhong F."/>
            <person name="Delcher A.L."/>
            <person name="Huson D.H."/>
            <person name="Kravitz S.A."/>
            <person name="Mouchard L."/>
            <person name="Reinert K."/>
            <person name="Remington K.A."/>
            <person name="Clark A.G."/>
            <person name="Waterman M.S."/>
            <person name="Eichler E.E."/>
            <person name="Adams M.D."/>
            <person name="Hunkapiller M.W."/>
            <person name="Myers E.W."/>
            <person name="Venter J.C."/>
        </authorList>
    </citation>
    <scope>NUCLEOTIDE SEQUENCE [LARGE SCALE GENOMIC DNA]</scope>
</reference>
<reference key="7">
    <citation type="journal article" date="2004" name="Genome Res.">
        <title>The status, quality, and expansion of the NIH full-length cDNA project: the Mammalian Gene Collection (MGC).</title>
        <authorList>
            <consortium name="The MGC Project Team"/>
        </authorList>
    </citation>
    <scope>NUCLEOTIDE SEQUENCE [LARGE SCALE MRNA] (ISOFORM 2)</scope>
    <source>
        <tissue>Lung</tissue>
    </source>
</reference>
<reference key="8">
    <citation type="journal article" date="2003" name="J. Med. Genet.">
        <title>Subcellular localisation, secretion, and post-translational processing of normal cochlin, and of mutants causing the sensorineural deafness and vestibular disorder, DFNA9.</title>
        <authorList>
            <person name="Robertson N.G."/>
            <person name="Hamaker S.A."/>
            <person name="Patriub V."/>
            <person name="Aster J.C."/>
            <person name="Morton C.C."/>
        </authorList>
    </citation>
    <scope>GLYCOSYLATION</scope>
    <scope>SUBCELLULAR LOCATION</scope>
    <scope>PROTEOLYTIC PROCESSING</scope>
</reference>
<reference key="9">
    <citation type="journal article" date="2007" name="J. Assoc. Res. Otolaryngol.">
        <title>Cochlin isoforms and their interaction with CTL2 (SLC44A2) in the inner ear.</title>
        <authorList>
            <person name="Kommareddi P.K."/>
            <person name="Nair T.S."/>
            <person name="Raphael Y."/>
            <person name="Telian S.A."/>
            <person name="Kim A.H."/>
            <person name="Arts H.A."/>
            <person name="El-Kashlan H.K."/>
            <person name="Carey T.E."/>
        </authorList>
    </citation>
    <scope>INTERACTION WITH SLC44A2</scope>
</reference>
<reference key="10">
    <citation type="journal article" date="2011" name="PLoS ONE">
        <title>Cochlin induced TREK-1 co-expression and annexin A2 secretion: role in trabecular meshwork cell elongation and motility.</title>
        <authorList>
            <person name="Goel M."/>
            <person name="Sienkiewicz A.E."/>
            <person name="Picciani R."/>
            <person name="Lee R.K."/>
            <person name="Bhattacharya S.K."/>
        </authorList>
    </citation>
    <scope>FUNCTION</scope>
    <scope>INTERACTION WITH ANXA2</scope>
</reference>
<reference key="11">
    <citation type="journal article" date="2001" name="EMBO J.">
        <title>NMR structure of the LCCL domain and implications for DFNA9 deafness disorder.</title>
        <authorList>
            <person name="Liepinsh E."/>
            <person name="Trexler M."/>
            <person name="Kaikkonen A."/>
            <person name="Weigelt J."/>
            <person name="Banyai L."/>
            <person name="Patthy L."/>
            <person name="Otting G."/>
        </authorList>
    </citation>
    <scope>STRUCTURE BY NMR OF 27-126</scope>
</reference>
<reference key="12">
    <citation type="journal article" date="1998" name="Nat. Genet.">
        <title>Mutations in a novel cochlear gene cause DFNA9, a human nonsyndromic deafness with vestibular dysfunction.</title>
        <authorList>
            <person name="Robertson N.G."/>
            <person name="Lu L."/>
            <person name="Heller S."/>
            <person name="Merchant S.N."/>
            <person name="Eavey R.D."/>
            <person name="McKenna M."/>
            <person name="Nadol J.B. Jr."/>
            <person name="Miyamoto R.T."/>
            <person name="Linthicum F.H. Jr."/>
            <person name="Neto J.F.L."/>
            <person name="Hudspeth A.J."/>
            <person name="Seidman C.E."/>
            <person name="Morton C.C."/>
            <person name="Seidman J.G."/>
        </authorList>
    </citation>
    <scope>VARIANTS DFNA9 GLY-66; GLU-88 AND ARG-117</scope>
</reference>
<reference key="13">
    <citation type="journal article" date="1999" name="Hum. Mol. Genet.">
        <title>A Pro51Ser mutation in the COCH gene is associated with late onset autosomal dominant progressive sensorineural hearing loss with vestibular defects.</title>
        <authorList>
            <person name="de Kok Y.J.M."/>
            <person name="Bom S.J.H."/>
            <person name="Brunt T.M."/>
            <person name="Kemperman M.H."/>
            <person name="van Beusekom E."/>
            <person name="van der Velde-Visser S.D."/>
            <person name="Robertson N.G."/>
            <person name="Morton C.C."/>
            <person name="Huygen P.L.M."/>
            <person name="Verhagen W.I.M."/>
            <person name="Brunner H.G."/>
            <person name="Cremers C.W.R.J."/>
            <person name="Cremers F.P.M."/>
        </authorList>
    </citation>
    <scope>VARIANT DFNA9 SER-51</scope>
</reference>
<reference key="14">
    <citation type="journal article" date="1999" name="Hum. Mol. Genet.">
        <title>High prevalence of symptoms of Meniere's disease in three families with a mutation in the COCH gene.</title>
        <authorList>
            <person name="Fransen E."/>
            <person name="Verstreken M."/>
            <person name="Verhagen W.I.M."/>
            <person name="Wuyts F.L."/>
            <person name="Huygen P.L.M."/>
            <person name="D'Haese P."/>
            <person name="Robertson N.G."/>
            <person name="Morton C.C."/>
            <person name="McGuirt W.T."/>
            <person name="Smith R.J.H."/>
            <person name="Declau F."/>
            <person name="Van de Heyning P.H."/>
            <person name="Van Camp G."/>
        </authorList>
    </citation>
    <scope>VARIANT DFNA9 SER-51</scope>
</reference>
<reference key="15">
    <citation type="journal article" date="2001" name="Hum. Mutat.">
        <title>Identification of a novel COCH mutation, I109N, highlights the similar clinical features observed in DFNA9 families.</title>
        <authorList>
            <person name="Kamarinos M."/>
            <person name="McGill J."/>
            <person name="Lynch M."/>
            <person name="Dahl H.-H.M."/>
        </authorList>
    </citation>
    <scope>VARIANT DFNA9 ASN-109</scope>
</reference>
<reference key="16">
    <citation type="journal article" date="2001" name="Hum. Mutat.">
        <authorList>
            <person name="Kamarinos M."/>
            <person name="McGill J."/>
            <person name="Lynch M."/>
            <person name="Dahl H.-H.M."/>
        </authorList>
    </citation>
    <scope>ERRATUM OF PUBMED:11295836</scope>
</reference>
<reference key="17">
    <citation type="journal article" date="2003" name="Eur. J. Hum. Genet.">
        <title>Mutations in the COCH gene are a frequent cause of autosomal dominant progressive cochleo-vestibular dysfunction, but not of Meniere's disease.</title>
        <authorList>
            <person name="Usami S."/>
            <person name="Takahashi K."/>
            <person name="Yuge I."/>
            <person name="Ohtsuka A."/>
            <person name="Namba A."/>
            <person name="Abe S."/>
            <person name="Fransen E."/>
            <person name="Patthy L."/>
            <person name="Otting G."/>
            <person name="Van Camp G."/>
        </authorList>
    </citation>
    <scope>VARIANT DFNA9 THR-119</scope>
</reference>
<reference key="18">
    <citation type="journal article" date="2003" name="Hum. Genet.">
        <title>Mutations in COCH that result in non-syndromic autosomal dominant deafness (DFNA9) affect matrix deposition of cochlin.</title>
        <authorList>
            <person name="Grabski R."/>
            <person name="Szul T."/>
            <person name="Sasaki T."/>
            <person name="Timpl R."/>
            <person name="Mayne R."/>
            <person name="Hicks B."/>
            <person name="Sztul E."/>
        </authorList>
    </citation>
    <scope>CHARACTERIZATION OF VARIANTS DFNA9 SER-51; GLY-66; GLU-88; ASN-109 AND ARG-117</scope>
</reference>
<reference key="19">
    <citation type="journal article" date="2006" name="Am. J. Med. Genet. A">
        <title>Identification of a novel COCH mutation, G87W, causing autosomal dominant hearing impairment (DFNA9).</title>
        <authorList>
            <person name="Collin R.W."/>
            <person name="Pauw R.J."/>
            <person name="Schoots J."/>
            <person name="Huygen P.L."/>
            <person name="Hoefsloot L.H."/>
            <person name="Cremers C.W."/>
            <person name="Kremer H."/>
        </authorList>
    </citation>
    <scope>VARIANT DFNA9 TRP-87</scope>
</reference>
<reference key="20">
    <citation type="journal article" date="2007" name="Ann. Otol. Rhinol. Laryngol.">
        <title>Phenotype description of a novel DFNA9/COCH mutation, I109T.</title>
        <authorList>
            <person name="Pauw R.J."/>
            <person name="Huygen P.L."/>
            <person name="Collin R.W."/>
            <person name="Cruysberg J.R."/>
            <person name="Hoefsloot L.H."/>
            <person name="Kremer H."/>
            <person name="Cremers C.W."/>
        </authorList>
    </citation>
    <scope>VARIANT DFNA9 THR-109</scope>
</reference>
<reference key="21">
    <citation type="journal article" date="2008" name="Clin. Genet.">
        <title>Novel mutations in the vWFA2 domain of COCH in two Chinese DFNA9 families.</title>
        <authorList>
            <person name="Yuan H.J."/>
            <person name="Han D.Y."/>
            <person name="Sun Q."/>
            <person name="Yan D."/>
            <person name="Sun H.J."/>
            <person name="Tao R."/>
            <person name="Cheng J."/>
            <person name="Qin W."/>
            <person name="Angeli S."/>
            <person name="Ouyang X.M."/>
            <person name="Yang S.Z."/>
            <person name="Feng L."/>
            <person name="Cao J.Y."/>
            <person name="Feng G.Y."/>
            <person name="Wang Y.F."/>
            <person name="Dai P."/>
            <person name="Zhai S.Q."/>
            <person name="Yang W.Y."/>
            <person name="He L."/>
            <person name="Liu X.Z."/>
        </authorList>
    </citation>
    <scope>VARIANTS DFNA9 THR-512 AND TYR-542</scope>
</reference>
<reference key="22">
    <citation type="journal article" date="2012" name="J. Mol. Med.">
        <title>A novel COCH mutation associated with autosomal dominant nonsyndromic hearing loss disrupts the structural stability of the vWFA2 domain.</title>
        <authorList>
            <person name="Cho H.J."/>
            <person name="Park H.J."/>
            <person name="Trexler M."/>
            <person name="Venselaar H."/>
            <person name="Lee K.Y."/>
            <person name="Robertson N.G."/>
            <person name="Baek J.I."/>
            <person name="Kang B.S."/>
            <person name="Morton C.C."/>
            <person name="Vriend G."/>
            <person name="Patthy L."/>
            <person name="Kim U.K."/>
        </authorList>
    </citation>
    <scope>VARIANT DFNA9 CYS-527</scope>
    <scope>CHARACTERIZATION OF VARIANT DFNA9 CYS-527</scope>
    <scope>SUBCELLULAR LOCATION</scope>
    <scope>INTERACTION WITH COLLAGEN</scope>
    <scope>SUBUNIT</scope>
    <scope>HOMODIMERIZATION</scope>
</reference>
<reference key="23">
    <citation type="journal article" date="2013" name="Clin. Genet.">
        <title>Whole exome sequencing identifies a novel DFNA9 mutation, C162Y.</title>
        <authorList>
            <person name="Gao J."/>
            <person name="Xue J."/>
            <person name="Chen L."/>
            <person name="Ke X."/>
            <person name="Qi Y."/>
            <person name="Liu Y."/>
        </authorList>
    </citation>
    <scope>VARIANT DFNA9 TYR-162</scope>
</reference>
<reference key="24">
    <citation type="journal article" date="2013" name="Int. J. Pediatr. Otorhinolaryngol.">
        <title>Clinical characterization of a novel COCH mutation G87V in a Chinese DFNA9 family.</title>
        <authorList>
            <person name="Chen D.Y."/>
            <person name="Chai Y.C."/>
            <person name="Yang T."/>
            <person name="Wu H."/>
        </authorList>
    </citation>
    <scope>VARIANT DFNA9 VAL-87</scope>
</reference>
<reference key="25">
    <citation type="journal article" date="2014" name="J. Transl. Med.">
        <title>Targeted genomic capture and massively parallel sequencing to identify novel variants causing Chinese hereditary hearing loss.</title>
        <authorList>
            <person name="Wei Q."/>
            <person name="Zhu H."/>
            <person name="Qian X."/>
            <person name="Chen Z."/>
            <person name="Yao J."/>
            <person name="Lu Y."/>
            <person name="Cao X."/>
            <person name="Xing G."/>
        </authorList>
    </citation>
    <scope>VARIANT DFNA9 ASP-38</scope>
</reference>
<reference key="26">
    <citation type="journal article" date="2018" name="Eur. J. Hum. Genet.">
        <title>Bi-allelic inactivating variants in the COCH gene cause autosomal recessive prelingual hearing impairment.</title>
        <authorList>
            <person name="JanssensdeVarebeke S.P.F."/>
            <person name="Van Camp G."/>
            <person name="Peeters N."/>
            <person name="Elinck E."/>
            <person name="Widdershoven J."/>
            <person name="Cox T."/>
            <person name="Deben K."/>
            <person name="Ketelslagers K."/>
            <person name="Crins T."/>
            <person name="Wuyts W."/>
        </authorList>
    </citation>
    <scope>VARIANT DFNB110 98-ARG--GLN-550 DEL</scope>
    <scope>INVOLVEMENT IN DFNB110</scope>
</reference>